<protein>
    <recommendedName>
        <fullName evidence="1">Large ribosomal subunit protein bL12</fullName>
    </recommendedName>
    <alternativeName>
        <fullName evidence="2">50S ribosomal protein L7/L12</fullName>
    </alternativeName>
</protein>
<reference key="1">
    <citation type="journal article" date="1998" name="Nature">
        <title>Deciphering the biology of Mycobacterium tuberculosis from the complete genome sequence.</title>
        <authorList>
            <person name="Cole S.T."/>
            <person name="Brosch R."/>
            <person name="Parkhill J."/>
            <person name="Garnier T."/>
            <person name="Churcher C.M."/>
            <person name="Harris D.E."/>
            <person name="Gordon S.V."/>
            <person name="Eiglmeier K."/>
            <person name="Gas S."/>
            <person name="Barry C.E. III"/>
            <person name="Tekaia F."/>
            <person name="Badcock K."/>
            <person name="Basham D."/>
            <person name="Brown D."/>
            <person name="Chillingworth T."/>
            <person name="Connor R."/>
            <person name="Davies R.M."/>
            <person name="Devlin K."/>
            <person name="Feltwell T."/>
            <person name="Gentles S."/>
            <person name="Hamlin N."/>
            <person name="Holroyd S."/>
            <person name="Hornsby T."/>
            <person name="Jagels K."/>
            <person name="Krogh A."/>
            <person name="McLean J."/>
            <person name="Moule S."/>
            <person name="Murphy L.D."/>
            <person name="Oliver S."/>
            <person name="Osborne J."/>
            <person name="Quail M.A."/>
            <person name="Rajandream M.A."/>
            <person name="Rogers J."/>
            <person name="Rutter S."/>
            <person name="Seeger K."/>
            <person name="Skelton S."/>
            <person name="Squares S."/>
            <person name="Squares R."/>
            <person name="Sulston J.E."/>
            <person name="Taylor K."/>
            <person name="Whitehead S."/>
            <person name="Barrell B.G."/>
        </authorList>
    </citation>
    <scope>NUCLEOTIDE SEQUENCE [LARGE SCALE GENOMIC DNA]</scope>
    <source>
        <strain>ATCC 25618 / H37Rv</strain>
    </source>
</reference>
<reference key="2">
    <citation type="journal article" date="2008" name="BMC Syst. Biol.">
        <title>targetTB: a target identification pipeline for Mycobacterium tuberculosis through an interactome, reactome and genome-scale structural analysis.</title>
        <authorList>
            <person name="Raman K."/>
            <person name="Yeturu K."/>
            <person name="Chandra N."/>
        </authorList>
    </citation>
    <scope>IDENTIFICATION AS A DRUG TARGET [LARGE SCALE ANALYSIS]</scope>
</reference>
<reference key="3">
    <citation type="journal article" date="2011" name="Mol. Cell. Proteomics">
        <title>Proteogenomic analysis of Mycobacterium tuberculosis by high resolution mass spectrometry.</title>
        <authorList>
            <person name="Kelkar D.S."/>
            <person name="Kumar D."/>
            <person name="Kumar P."/>
            <person name="Balakrishnan L."/>
            <person name="Muthusamy B."/>
            <person name="Yadav A.K."/>
            <person name="Shrivastava P."/>
            <person name="Marimuthu A."/>
            <person name="Anand S."/>
            <person name="Sundaram H."/>
            <person name="Kingsbury R."/>
            <person name="Harsha H.C."/>
            <person name="Nair B."/>
            <person name="Prasad T.S."/>
            <person name="Chauhan D.S."/>
            <person name="Katoch K."/>
            <person name="Katoch V.M."/>
            <person name="Kumar P."/>
            <person name="Chaerkady R."/>
            <person name="Ramachandran S."/>
            <person name="Dash D."/>
            <person name="Pandey A."/>
        </authorList>
    </citation>
    <scope>IDENTIFICATION BY MASS SPECTROMETRY [LARGE SCALE ANALYSIS]</scope>
    <source>
        <strain>ATCC 25618 / H37Rv</strain>
    </source>
</reference>
<evidence type="ECO:0000255" key="1">
    <source>
        <dbReference type="HAMAP-Rule" id="MF_00368"/>
    </source>
</evidence>
<evidence type="ECO:0000305" key="2"/>
<dbReference type="EMBL" id="AL123456">
    <property type="protein sequence ID" value="CCP43395.1"/>
    <property type="molecule type" value="Genomic_DNA"/>
</dbReference>
<dbReference type="PIR" id="A70615">
    <property type="entry name" value="A70615"/>
</dbReference>
<dbReference type="RefSeq" id="NP_215166.1">
    <property type="nucleotide sequence ID" value="NC_000962.3"/>
</dbReference>
<dbReference type="RefSeq" id="WP_003403353.1">
    <property type="nucleotide sequence ID" value="NZ_NVQJ01000007.1"/>
</dbReference>
<dbReference type="PDB" id="8YEQ">
    <property type="method" value="X-ray"/>
    <property type="resolution" value="1.50 A"/>
    <property type="chains" value="A=1-130"/>
</dbReference>
<dbReference type="PDBsum" id="8YEQ"/>
<dbReference type="SMR" id="P9WHE3"/>
<dbReference type="BioGRID" id="4357503">
    <property type="interactions" value="1"/>
</dbReference>
<dbReference type="FunCoup" id="P9WHE3">
    <property type="interactions" value="216"/>
</dbReference>
<dbReference type="IntAct" id="P9WHE3">
    <property type="interactions" value="1"/>
</dbReference>
<dbReference type="STRING" id="83332.Rv0652"/>
<dbReference type="PaxDb" id="83332-Rv0652"/>
<dbReference type="DNASU" id="888078"/>
<dbReference type="GeneID" id="45424612"/>
<dbReference type="GeneID" id="888078"/>
<dbReference type="KEGG" id="mtu:Rv0652"/>
<dbReference type="KEGG" id="mtv:RVBD_0652"/>
<dbReference type="TubercuList" id="Rv0652"/>
<dbReference type="eggNOG" id="COG0222">
    <property type="taxonomic scope" value="Bacteria"/>
</dbReference>
<dbReference type="InParanoid" id="P9WHE3"/>
<dbReference type="OrthoDB" id="9811748at2"/>
<dbReference type="PhylomeDB" id="P9WHE3"/>
<dbReference type="PHI-base" id="PHI:7583"/>
<dbReference type="PRO" id="PR:P9WHE3"/>
<dbReference type="Proteomes" id="UP000001584">
    <property type="component" value="Chromosome"/>
</dbReference>
<dbReference type="GO" id="GO:0005829">
    <property type="term" value="C:cytosol"/>
    <property type="evidence" value="ECO:0007005"/>
    <property type="project" value="MTBBASE"/>
</dbReference>
<dbReference type="GO" id="GO:0022625">
    <property type="term" value="C:cytosolic large ribosomal subunit"/>
    <property type="evidence" value="ECO:0000318"/>
    <property type="project" value="GO_Central"/>
</dbReference>
<dbReference type="GO" id="GO:0009274">
    <property type="term" value="C:peptidoglycan-based cell wall"/>
    <property type="evidence" value="ECO:0007005"/>
    <property type="project" value="MTBBASE"/>
</dbReference>
<dbReference type="GO" id="GO:0005886">
    <property type="term" value="C:plasma membrane"/>
    <property type="evidence" value="ECO:0007005"/>
    <property type="project" value="MTBBASE"/>
</dbReference>
<dbReference type="GO" id="GO:0003729">
    <property type="term" value="F:mRNA binding"/>
    <property type="evidence" value="ECO:0000318"/>
    <property type="project" value="GO_Central"/>
</dbReference>
<dbReference type="GO" id="GO:0003735">
    <property type="term" value="F:structural constituent of ribosome"/>
    <property type="evidence" value="ECO:0000318"/>
    <property type="project" value="GO_Central"/>
</dbReference>
<dbReference type="GO" id="GO:0006412">
    <property type="term" value="P:translation"/>
    <property type="evidence" value="ECO:0000318"/>
    <property type="project" value="GO_Central"/>
</dbReference>
<dbReference type="CDD" id="cd00387">
    <property type="entry name" value="Ribosomal_L7_L12"/>
    <property type="match status" value="1"/>
</dbReference>
<dbReference type="FunFam" id="1.20.5.710:FF:000005">
    <property type="entry name" value="50S ribosomal protein L7/L12"/>
    <property type="match status" value="1"/>
</dbReference>
<dbReference type="FunFam" id="3.30.1390.10:FF:000001">
    <property type="entry name" value="50S ribosomal protein L7/L12"/>
    <property type="match status" value="1"/>
</dbReference>
<dbReference type="Gene3D" id="3.30.1390.10">
    <property type="match status" value="1"/>
</dbReference>
<dbReference type="Gene3D" id="1.20.5.710">
    <property type="entry name" value="Single helix bin"/>
    <property type="match status" value="1"/>
</dbReference>
<dbReference type="HAMAP" id="MF_00368">
    <property type="entry name" value="Ribosomal_bL12"/>
    <property type="match status" value="1"/>
</dbReference>
<dbReference type="InterPro" id="IPR000206">
    <property type="entry name" value="Ribosomal_bL12"/>
</dbReference>
<dbReference type="InterPro" id="IPR013823">
    <property type="entry name" value="Ribosomal_bL12_C"/>
</dbReference>
<dbReference type="InterPro" id="IPR014719">
    <property type="entry name" value="Ribosomal_bL12_C/ClpS-like"/>
</dbReference>
<dbReference type="InterPro" id="IPR008932">
    <property type="entry name" value="Ribosomal_bL12_oligo"/>
</dbReference>
<dbReference type="InterPro" id="IPR036235">
    <property type="entry name" value="Ribosomal_bL12_oligo_N_sf"/>
</dbReference>
<dbReference type="NCBIfam" id="TIGR00855">
    <property type="entry name" value="L12"/>
    <property type="match status" value="1"/>
</dbReference>
<dbReference type="PANTHER" id="PTHR45987">
    <property type="entry name" value="39S RIBOSOMAL PROTEIN L12"/>
    <property type="match status" value="1"/>
</dbReference>
<dbReference type="PANTHER" id="PTHR45987:SF4">
    <property type="entry name" value="LARGE RIBOSOMAL SUBUNIT PROTEIN BL12M"/>
    <property type="match status" value="1"/>
</dbReference>
<dbReference type="Pfam" id="PF00542">
    <property type="entry name" value="Ribosomal_L12"/>
    <property type="match status" value="1"/>
</dbReference>
<dbReference type="Pfam" id="PF16320">
    <property type="entry name" value="Ribosomal_L12_N"/>
    <property type="match status" value="1"/>
</dbReference>
<dbReference type="SUPFAM" id="SSF54736">
    <property type="entry name" value="ClpS-like"/>
    <property type="match status" value="1"/>
</dbReference>
<dbReference type="SUPFAM" id="SSF48300">
    <property type="entry name" value="Ribosomal protein L7/12, oligomerisation (N-terminal) domain"/>
    <property type="match status" value="1"/>
</dbReference>
<gene>
    <name evidence="1" type="primary">rplL</name>
    <name type="ordered locus">Rv0652</name>
    <name type="ORF">MTCY20H10.33</name>
</gene>
<accession>P9WHE3</accession>
<accession>L0T4C2</accession>
<accession>P0A5V2</accession>
<accession>P37381</accession>
<keyword id="KW-0002">3D-structure</keyword>
<keyword id="KW-1185">Reference proteome</keyword>
<keyword id="KW-0687">Ribonucleoprotein</keyword>
<keyword id="KW-0689">Ribosomal protein</keyword>
<name>RL7_MYCTU</name>
<organism>
    <name type="scientific">Mycobacterium tuberculosis (strain ATCC 25618 / H37Rv)</name>
    <dbReference type="NCBI Taxonomy" id="83332"/>
    <lineage>
        <taxon>Bacteria</taxon>
        <taxon>Bacillati</taxon>
        <taxon>Actinomycetota</taxon>
        <taxon>Actinomycetes</taxon>
        <taxon>Mycobacteriales</taxon>
        <taxon>Mycobacteriaceae</taxon>
        <taxon>Mycobacterium</taxon>
        <taxon>Mycobacterium tuberculosis complex</taxon>
    </lineage>
</organism>
<sequence length="130" mass="13440">MAKLSTDELLDAFKEMTLLELSDFVKKFEETFEVTAAAPVAVAAAGAAPAGAAVEAAEEQSEFDVILEAAGDKKIGVIKVVREIVSGLGLKEAKDLVDGAPKPLLEKVAKEAADEAKAKLEAAGATVTVK</sequence>
<proteinExistence type="evidence at protein level"/>
<comment type="function">
    <text evidence="1">Forms part of the ribosomal stalk which helps the ribosome interact with GTP-bound translation factors. Is thus essential for accurate translation.</text>
</comment>
<comment type="subunit">
    <text evidence="1">Homodimer. Part of the ribosomal stalk of the 50S ribosomal subunit. Forms a multimeric L10(L12)X complex, where L10 forms an elongated spine to which 2 to 4 L12 dimers bind in a sequential fashion. Binds GTP-bound translation factors.</text>
</comment>
<comment type="interaction">
    <interactant intactId="EBI-16016380">
        <id>P9WHE3</id>
    </interactant>
    <interactant intactId="EBI-16016356">
        <id>P9WHE7</id>
        <label>rplJ</label>
    </interactant>
    <organismsDiffer>false</organismsDiffer>
    <experiments>3</experiments>
</comment>
<comment type="miscellaneous">
    <text>Was identified as a high-confidence drug target.</text>
</comment>
<comment type="similarity">
    <text evidence="1">Belongs to the bacterial ribosomal protein bL12 family.</text>
</comment>
<feature type="chain" id="PRO_0000157550" description="Large ribosomal subunit protein bL12">
    <location>
        <begin position="1"/>
        <end position="130"/>
    </location>
</feature>